<dbReference type="EC" id="3.1.1.1" evidence="1"/>
<dbReference type="EMBL" id="CP000822">
    <property type="protein sequence ID" value="ABV14062.1"/>
    <property type="molecule type" value="Genomic_DNA"/>
</dbReference>
<dbReference type="RefSeq" id="WP_012133775.1">
    <property type="nucleotide sequence ID" value="NC_009792.1"/>
</dbReference>
<dbReference type="SMR" id="A8AKP9"/>
<dbReference type="STRING" id="290338.CKO_02957"/>
<dbReference type="ESTHER" id="citk8-y2957">
    <property type="family name" value="Duf_1100-R"/>
</dbReference>
<dbReference type="GeneID" id="45136773"/>
<dbReference type="KEGG" id="cko:CKO_02957"/>
<dbReference type="HOGENOM" id="CLU_036819_0_0_6"/>
<dbReference type="OrthoDB" id="5590073at2"/>
<dbReference type="Proteomes" id="UP000008148">
    <property type="component" value="Chromosome"/>
</dbReference>
<dbReference type="GO" id="GO:0106435">
    <property type="term" value="F:carboxylesterase activity"/>
    <property type="evidence" value="ECO:0007669"/>
    <property type="project" value="UniProtKB-EC"/>
</dbReference>
<dbReference type="FunFam" id="3.40.50.1820:FF:000022">
    <property type="entry name" value="Esterase FrsA"/>
    <property type="match status" value="1"/>
</dbReference>
<dbReference type="Gene3D" id="3.40.50.1820">
    <property type="entry name" value="alpha/beta hydrolase"/>
    <property type="match status" value="1"/>
</dbReference>
<dbReference type="HAMAP" id="MF_01063">
    <property type="entry name" value="FrsA"/>
    <property type="match status" value="1"/>
</dbReference>
<dbReference type="InterPro" id="IPR029058">
    <property type="entry name" value="AB_hydrolase_fold"/>
</dbReference>
<dbReference type="InterPro" id="IPR043423">
    <property type="entry name" value="FrsA"/>
</dbReference>
<dbReference type="InterPro" id="IPR010520">
    <property type="entry name" value="FrsA-like"/>
</dbReference>
<dbReference type="InterPro" id="IPR050261">
    <property type="entry name" value="FrsA_esterase"/>
</dbReference>
<dbReference type="NCBIfam" id="NF003460">
    <property type="entry name" value="PRK05077.1"/>
    <property type="match status" value="1"/>
</dbReference>
<dbReference type="PANTHER" id="PTHR22946">
    <property type="entry name" value="DIENELACTONE HYDROLASE DOMAIN-CONTAINING PROTEIN-RELATED"/>
    <property type="match status" value="1"/>
</dbReference>
<dbReference type="PANTHER" id="PTHR22946:SF4">
    <property type="entry name" value="ESTERASE FRSA"/>
    <property type="match status" value="1"/>
</dbReference>
<dbReference type="Pfam" id="PF06500">
    <property type="entry name" value="FrsA-like"/>
    <property type="match status" value="1"/>
</dbReference>
<dbReference type="SUPFAM" id="SSF53474">
    <property type="entry name" value="alpha/beta-Hydrolases"/>
    <property type="match status" value="1"/>
</dbReference>
<sequence length="414" mass="46946">MSQANLSETLFKPRFKHPETSTLVRRFNHGTQPSVQSTLDGKNVPHWYRMINRLMWIWRGIDPREILDVQARIVMSEAERTDKELYDTVIGYRGGNWIFEWSKQAMEWQQKACQETDPQRSGRHWLHASSLYNIAAYPHLKGDELAEQAQALANRAYEEAAQRLPGSLREMAFSIPGGAPVTAFLHMPKGDGPFPTVLMCGGLDSMQTDYYTLFERYFAPRGMAMLTLDMPSVGFSSKWKLTQDSSLLHQHVLKALPGVPWVDHTRVVAFGFRFGANVAVRLAYLEAPRLKAVACLGPVVHALLSDSQRQGTVPEMYLDVLASRLGMHDASDEALRVELNRYSLKVQGLLGRRCPTPMLSGFWKNDPFSPEEESRLITSSSSDGKLMEIPFNPVYRNFDTALKEITGWINHRLC</sequence>
<reference key="1">
    <citation type="submission" date="2007-08" db="EMBL/GenBank/DDBJ databases">
        <authorList>
            <consortium name="The Citrobacter koseri Genome Sequencing Project"/>
            <person name="McClelland M."/>
            <person name="Sanderson E.K."/>
            <person name="Porwollik S."/>
            <person name="Spieth J."/>
            <person name="Clifton W.S."/>
            <person name="Latreille P."/>
            <person name="Courtney L."/>
            <person name="Wang C."/>
            <person name="Pepin K."/>
            <person name="Bhonagiri V."/>
            <person name="Nash W."/>
            <person name="Johnson M."/>
            <person name="Thiruvilangam P."/>
            <person name="Wilson R."/>
        </authorList>
    </citation>
    <scope>NUCLEOTIDE SEQUENCE [LARGE SCALE GENOMIC DNA]</scope>
    <source>
        <strain>ATCC BAA-895 / CDC 4225-83 / SGSC4696</strain>
    </source>
</reference>
<evidence type="ECO:0000255" key="1">
    <source>
        <dbReference type="HAMAP-Rule" id="MF_01063"/>
    </source>
</evidence>
<feature type="chain" id="PRO_1000064476" description="Esterase FrsA">
    <location>
        <begin position="1"/>
        <end position="414"/>
    </location>
</feature>
<proteinExistence type="inferred from homology"/>
<organism>
    <name type="scientific">Citrobacter koseri (strain ATCC BAA-895 / CDC 4225-83 / SGSC4696)</name>
    <dbReference type="NCBI Taxonomy" id="290338"/>
    <lineage>
        <taxon>Bacteria</taxon>
        <taxon>Pseudomonadati</taxon>
        <taxon>Pseudomonadota</taxon>
        <taxon>Gammaproteobacteria</taxon>
        <taxon>Enterobacterales</taxon>
        <taxon>Enterobacteriaceae</taxon>
        <taxon>Citrobacter</taxon>
    </lineage>
</organism>
<protein>
    <recommendedName>
        <fullName evidence="1">Esterase FrsA</fullName>
        <ecNumber evidence="1">3.1.1.1</ecNumber>
    </recommendedName>
</protein>
<keyword id="KW-0378">Hydrolase</keyword>
<keyword id="KW-1185">Reference proteome</keyword>
<keyword id="KW-0719">Serine esterase</keyword>
<name>FRSA_CITK8</name>
<gene>
    <name evidence="1" type="primary">frsA</name>
    <name type="ordered locus">CKO_02957</name>
</gene>
<comment type="function">
    <text evidence="1">Catalyzes the hydrolysis of esters.</text>
</comment>
<comment type="catalytic activity">
    <reaction evidence="1">
        <text>a carboxylic ester + H2O = an alcohol + a carboxylate + H(+)</text>
        <dbReference type="Rhea" id="RHEA:21164"/>
        <dbReference type="ChEBI" id="CHEBI:15377"/>
        <dbReference type="ChEBI" id="CHEBI:15378"/>
        <dbReference type="ChEBI" id="CHEBI:29067"/>
        <dbReference type="ChEBI" id="CHEBI:30879"/>
        <dbReference type="ChEBI" id="CHEBI:33308"/>
        <dbReference type="EC" id="3.1.1.1"/>
    </reaction>
</comment>
<comment type="similarity">
    <text evidence="1">Belongs to the FrsA family.</text>
</comment>
<accession>A8AKP9</accession>